<comment type="function">
    <text evidence="1">Produces ATP from ADP in the presence of a proton gradient across the membrane.</text>
</comment>
<comment type="subunit">
    <text evidence="1">F-type ATPases have 2 components, CF(1) - the catalytic core - and CF(0) - the membrane proton channel. CF(1) has five subunits: alpha(3), beta(3), gamma(1), delta(1), epsilon(1). CF(0) has three main subunits: a, b and c.</text>
</comment>
<comment type="subcellular location">
    <subcellularLocation>
        <location evidence="1">Cell membrane</location>
        <topology evidence="1">Peripheral membrane protein</topology>
    </subcellularLocation>
</comment>
<comment type="similarity">
    <text evidence="1">Belongs to the ATPase epsilon chain family.</text>
</comment>
<accession>C1A1X7</accession>
<organism>
    <name type="scientific">Rhodococcus erythropolis (strain PR4 / NBRC 100887)</name>
    <dbReference type="NCBI Taxonomy" id="234621"/>
    <lineage>
        <taxon>Bacteria</taxon>
        <taxon>Bacillati</taxon>
        <taxon>Actinomycetota</taxon>
        <taxon>Actinomycetes</taxon>
        <taxon>Mycobacteriales</taxon>
        <taxon>Nocardiaceae</taxon>
        <taxon>Rhodococcus</taxon>
        <taxon>Rhodococcus erythropolis group</taxon>
    </lineage>
</organism>
<sequence>MAEMTVELVAVEQRLWSGSATLVSAQTTEGEIGIMPGHEPVLGQLIEGGTVSITPVDGERIVAAVHGGFLSVTATTVTILAESADMAQDIDVEAAKAVLAENSGDLEAIAVAKGQLRAVERA</sequence>
<dbReference type="EMBL" id="AP008957">
    <property type="protein sequence ID" value="BAH34612.1"/>
    <property type="molecule type" value="Genomic_DNA"/>
</dbReference>
<dbReference type="RefSeq" id="WP_019749170.1">
    <property type="nucleotide sequence ID" value="NC_012490.1"/>
</dbReference>
<dbReference type="SMR" id="C1A1X7"/>
<dbReference type="KEGG" id="rer:RER_39040"/>
<dbReference type="eggNOG" id="COG0355">
    <property type="taxonomic scope" value="Bacteria"/>
</dbReference>
<dbReference type="HOGENOM" id="CLU_084338_4_0_11"/>
<dbReference type="Proteomes" id="UP000002204">
    <property type="component" value="Chromosome"/>
</dbReference>
<dbReference type="GO" id="GO:0005886">
    <property type="term" value="C:plasma membrane"/>
    <property type="evidence" value="ECO:0007669"/>
    <property type="project" value="UniProtKB-SubCell"/>
</dbReference>
<dbReference type="GO" id="GO:0045259">
    <property type="term" value="C:proton-transporting ATP synthase complex"/>
    <property type="evidence" value="ECO:0007669"/>
    <property type="project" value="UniProtKB-KW"/>
</dbReference>
<dbReference type="GO" id="GO:0005524">
    <property type="term" value="F:ATP binding"/>
    <property type="evidence" value="ECO:0007669"/>
    <property type="project" value="UniProtKB-UniRule"/>
</dbReference>
<dbReference type="GO" id="GO:0046933">
    <property type="term" value="F:proton-transporting ATP synthase activity, rotational mechanism"/>
    <property type="evidence" value="ECO:0007669"/>
    <property type="project" value="UniProtKB-UniRule"/>
</dbReference>
<dbReference type="CDD" id="cd12152">
    <property type="entry name" value="F1-ATPase_delta"/>
    <property type="match status" value="1"/>
</dbReference>
<dbReference type="Gene3D" id="2.60.15.10">
    <property type="entry name" value="F0F1 ATP synthase delta/epsilon subunit, N-terminal"/>
    <property type="match status" value="1"/>
</dbReference>
<dbReference type="HAMAP" id="MF_00530">
    <property type="entry name" value="ATP_synth_epsil_bac"/>
    <property type="match status" value="1"/>
</dbReference>
<dbReference type="InterPro" id="IPR001469">
    <property type="entry name" value="ATP_synth_F1_dsu/esu"/>
</dbReference>
<dbReference type="InterPro" id="IPR020546">
    <property type="entry name" value="ATP_synth_F1_dsu/esu_N"/>
</dbReference>
<dbReference type="InterPro" id="IPR036771">
    <property type="entry name" value="ATPsynth_dsu/esu_N"/>
</dbReference>
<dbReference type="NCBIfam" id="TIGR01216">
    <property type="entry name" value="ATP_synt_epsi"/>
    <property type="match status" value="1"/>
</dbReference>
<dbReference type="NCBIfam" id="NF001852">
    <property type="entry name" value="PRK00571.2-5"/>
    <property type="match status" value="1"/>
</dbReference>
<dbReference type="NCBIfam" id="NF009977">
    <property type="entry name" value="PRK13442.1"/>
    <property type="match status" value="1"/>
</dbReference>
<dbReference type="PANTHER" id="PTHR13822">
    <property type="entry name" value="ATP SYNTHASE DELTA/EPSILON CHAIN"/>
    <property type="match status" value="1"/>
</dbReference>
<dbReference type="PANTHER" id="PTHR13822:SF10">
    <property type="entry name" value="ATP SYNTHASE EPSILON CHAIN, CHLOROPLASTIC"/>
    <property type="match status" value="1"/>
</dbReference>
<dbReference type="Pfam" id="PF02823">
    <property type="entry name" value="ATP-synt_DE_N"/>
    <property type="match status" value="1"/>
</dbReference>
<dbReference type="SUPFAM" id="SSF51344">
    <property type="entry name" value="Epsilon subunit of F1F0-ATP synthase N-terminal domain"/>
    <property type="match status" value="1"/>
</dbReference>
<feature type="chain" id="PRO_1000211789" description="ATP synthase epsilon chain">
    <location>
        <begin position="1"/>
        <end position="122"/>
    </location>
</feature>
<protein>
    <recommendedName>
        <fullName evidence="1">ATP synthase epsilon chain</fullName>
    </recommendedName>
    <alternativeName>
        <fullName evidence="1">ATP synthase F1 sector epsilon subunit</fullName>
    </alternativeName>
    <alternativeName>
        <fullName evidence="1">F-ATPase epsilon subunit</fullName>
    </alternativeName>
</protein>
<gene>
    <name evidence="1" type="primary">atpC</name>
    <name type="ordered locus">RER_39040</name>
</gene>
<evidence type="ECO:0000255" key="1">
    <source>
        <dbReference type="HAMAP-Rule" id="MF_00530"/>
    </source>
</evidence>
<name>ATPE_RHOE4</name>
<proteinExistence type="inferred from homology"/>
<keyword id="KW-0066">ATP synthesis</keyword>
<keyword id="KW-1003">Cell membrane</keyword>
<keyword id="KW-0139">CF(1)</keyword>
<keyword id="KW-0375">Hydrogen ion transport</keyword>
<keyword id="KW-0406">Ion transport</keyword>
<keyword id="KW-0472">Membrane</keyword>
<keyword id="KW-0813">Transport</keyword>
<reference key="1">
    <citation type="submission" date="2005-03" db="EMBL/GenBank/DDBJ databases">
        <title>Comparison of the complete genome sequences of Rhodococcus erythropolis PR4 and Rhodococcus opacus B4.</title>
        <authorList>
            <person name="Takarada H."/>
            <person name="Sekine M."/>
            <person name="Hosoyama A."/>
            <person name="Yamada R."/>
            <person name="Fujisawa T."/>
            <person name="Omata S."/>
            <person name="Shimizu A."/>
            <person name="Tsukatani N."/>
            <person name="Tanikawa S."/>
            <person name="Fujita N."/>
            <person name="Harayama S."/>
        </authorList>
    </citation>
    <scope>NUCLEOTIDE SEQUENCE [LARGE SCALE GENOMIC DNA]</scope>
    <source>
        <strain>PR4 / NBRC 100887</strain>
    </source>
</reference>